<proteinExistence type="evidence at transcript level"/>
<reference key="1">
    <citation type="journal article" date="1999" name="Nature">
        <title>Sequence and analysis of chromosome 4 of the plant Arabidopsis thaliana.</title>
        <authorList>
            <person name="Mayer K.F.X."/>
            <person name="Schueller C."/>
            <person name="Wambutt R."/>
            <person name="Murphy G."/>
            <person name="Volckaert G."/>
            <person name="Pohl T."/>
            <person name="Duesterhoeft A."/>
            <person name="Stiekema W."/>
            <person name="Entian K.-D."/>
            <person name="Terryn N."/>
            <person name="Harris B."/>
            <person name="Ansorge W."/>
            <person name="Brandt P."/>
            <person name="Grivell L.A."/>
            <person name="Rieger M."/>
            <person name="Weichselgartner M."/>
            <person name="de Simone V."/>
            <person name="Obermaier B."/>
            <person name="Mache R."/>
            <person name="Mueller M."/>
            <person name="Kreis M."/>
            <person name="Delseny M."/>
            <person name="Puigdomenech P."/>
            <person name="Watson M."/>
            <person name="Schmidtheini T."/>
            <person name="Reichert B."/>
            <person name="Portetelle D."/>
            <person name="Perez-Alonso M."/>
            <person name="Boutry M."/>
            <person name="Bancroft I."/>
            <person name="Vos P."/>
            <person name="Hoheisel J."/>
            <person name="Zimmermann W."/>
            <person name="Wedler H."/>
            <person name="Ridley P."/>
            <person name="Langham S.-A."/>
            <person name="McCullagh B."/>
            <person name="Bilham L."/>
            <person name="Robben J."/>
            <person name="van der Schueren J."/>
            <person name="Grymonprez B."/>
            <person name="Chuang Y.-J."/>
            <person name="Vandenbussche F."/>
            <person name="Braeken M."/>
            <person name="Weltjens I."/>
            <person name="Voet M."/>
            <person name="Bastiaens I."/>
            <person name="Aert R."/>
            <person name="Defoor E."/>
            <person name="Weitzenegger T."/>
            <person name="Bothe G."/>
            <person name="Ramsperger U."/>
            <person name="Hilbert H."/>
            <person name="Braun M."/>
            <person name="Holzer E."/>
            <person name="Brandt A."/>
            <person name="Peters S."/>
            <person name="van Staveren M."/>
            <person name="Dirkse W."/>
            <person name="Mooijman P."/>
            <person name="Klein Lankhorst R."/>
            <person name="Rose M."/>
            <person name="Hauf J."/>
            <person name="Koetter P."/>
            <person name="Berneiser S."/>
            <person name="Hempel S."/>
            <person name="Feldpausch M."/>
            <person name="Lamberth S."/>
            <person name="Van den Daele H."/>
            <person name="De Keyser A."/>
            <person name="Buysshaert C."/>
            <person name="Gielen J."/>
            <person name="Villarroel R."/>
            <person name="De Clercq R."/>
            <person name="van Montagu M."/>
            <person name="Rogers J."/>
            <person name="Cronin A."/>
            <person name="Quail M.A."/>
            <person name="Bray-Allen S."/>
            <person name="Clark L."/>
            <person name="Doggett J."/>
            <person name="Hall S."/>
            <person name="Kay M."/>
            <person name="Lennard N."/>
            <person name="McLay K."/>
            <person name="Mayes R."/>
            <person name="Pettett A."/>
            <person name="Rajandream M.A."/>
            <person name="Lyne M."/>
            <person name="Benes V."/>
            <person name="Rechmann S."/>
            <person name="Borkova D."/>
            <person name="Bloecker H."/>
            <person name="Scharfe M."/>
            <person name="Grimm M."/>
            <person name="Loehnert T.-H."/>
            <person name="Dose S."/>
            <person name="de Haan M."/>
            <person name="Maarse A.C."/>
            <person name="Schaefer M."/>
            <person name="Mueller-Auer S."/>
            <person name="Gabel C."/>
            <person name="Fuchs M."/>
            <person name="Fartmann B."/>
            <person name="Granderath K."/>
            <person name="Dauner D."/>
            <person name="Herzl A."/>
            <person name="Neumann S."/>
            <person name="Argiriou A."/>
            <person name="Vitale D."/>
            <person name="Liguori R."/>
            <person name="Piravandi E."/>
            <person name="Massenet O."/>
            <person name="Quigley F."/>
            <person name="Clabauld G."/>
            <person name="Muendlein A."/>
            <person name="Felber R."/>
            <person name="Schnabl S."/>
            <person name="Hiller R."/>
            <person name="Schmidt W."/>
            <person name="Lecharny A."/>
            <person name="Aubourg S."/>
            <person name="Chefdor F."/>
            <person name="Cooke R."/>
            <person name="Berger C."/>
            <person name="Monfort A."/>
            <person name="Casacuberta E."/>
            <person name="Gibbons T."/>
            <person name="Weber N."/>
            <person name="Vandenbol M."/>
            <person name="Bargues M."/>
            <person name="Terol J."/>
            <person name="Torres A."/>
            <person name="Perez-Perez A."/>
            <person name="Purnelle B."/>
            <person name="Bent E."/>
            <person name="Johnson S."/>
            <person name="Tacon D."/>
            <person name="Jesse T."/>
            <person name="Heijnen L."/>
            <person name="Schwarz S."/>
            <person name="Scholler P."/>
            <person name="Heber S."/>
            <person name="Francs P."/>
            <person name="Bielke C."/>
            <person name="Frishman D."/>
            <person name="Haase D."/>
            <person name="Lemcke K."/>
            <person name="Mewes H.-W."/>
            <person name="Stocker S."/>
            <person name="Zaccaria P."/>
            <person name="Bevan M."/>
            <person name="Wilson R.K."/>
            <person name="de la Bastide M."/>
            <person name="Habermann K."/>
            <person name="Parnell L."/>
            <person name="Dedhia N."/>
            <person name="Gnoj L."/>
            <person name="Schutz K."/>
            <person name="Huang E."/>
            <person name="Spiegel L."/>
            <person name="Sekhon M."/>
            <person name="Murray J."/>
            <person name="Sheet P."/>
            <person name="Cordes M."/>
            <person name="Abu-Threideh J."/>
            <person name="Stoneking T."/>
            <person name="Kalicki J."/>
            <person name="Graves T."/>
            <person name="Harmon G."/>
            <person name="Edwards J."/>
            <person name="Latreille P."/>
            <person name="Courtney L."/>
            <person name="Cloud J."/>
            <person name="Abbott A."/>
            <person name="Scott K."/>
            <person name="Johnson D."/>
            <person name="Minx P."/>
            <person name="Bentley D."/>
            <person name="Fulton B."/>
            <person name="Miller N."/>
            <person name="Greco T."/>
            <person name="Kemp K."/>
            <person name="Kramer J."/>
            <person name="Fulton L."/>
            <person name="Mardis E."/>
            <person name="Dante M."/>
            <person name="Pepin K."/>
            <person name="Hillier L.W."/>
            <person name="Nelson J."/>
            <person name="Spieth J."/>
            <person name="Ryan E."/>
            <person name="Andrews S."/>
            <person name="Geisel C."/>
            <person name="Layman D."/>
            <person name="Du H."/>
            <person name="Ali J."/>
            <person name="Berghoff A."/>
            <person name="Jones K."/>
            <person name="Drone K."/>
            <person name="Cotton M."/>
            <person name="Joshu C."/>
            <person name="Antonoiu B."/>
            <person name="Zidanic M."/>
            <person name="Strong C."/>
            <person name="Sun H."/>
            <person name="Lamar B."/>
            <person name="Yordan C."/>
            <person name="Ma P."/>
            <person name="Zhong J."/>
            <person name="Preston R."/>
            <person name="Vil D."/>
            <person name="Shekher M."/>
            <person name="Matero A."/>
            <person name="Shah R."/>
            <person name="Swaby I.K."/>
            <person name="O'Shaughnessy A."/>
            <person name="Rodriguez M."/>
            <person name="Hoffman J."/>
            <person name="Till S."/>
            <person name="Granat S."/>
            <person name="Shohdy N."/>
            <person name="Hasegawa A."/>
            <person name="Hameed A."/>
            <person name="Lodhi M."/>
            <person name="Johnson A."/>
            <person name="Chen E."/>
            <person name="Marra M.A."/>
            <person name="Martienssen R."/>
            <person name="McCombie W.R."/>
        </authorList>
    </citation>
    <scope>NUCLEOTIDE SEQUENCE [LARGE SCALE GENOMIC DNA]</scope>
    <source>
        <strain>cv. Columbia</strain>
    </source>
</reference>
<reference key="2">
    <citation type="journal article" date="2017" name="Plant J.">
        <title>Araport11: a complete reannotation of the Arabidopsis thaliana reference genome.</title>
        <authorList>
            <person name="Cheng C.Y."/>
            <person name="Krishnakumar V."/>
            <person name="Chan A.P."/>
            <person name="Thibaud-Nissen F."/>
            <person name="Schobel S."/>
            <person name="Town C.D."/>
        </authorList>
    </citation>
    <scope>GENOME REANNOTATION</scope>
    <source>
        <strain>cv. Columbia</strain>
    </source>
</reference>
<reference key="3">
    <citation type="journal article" date="2003" name="Science">
        <title>Empirical analysis of transcriptional activity in the Arabidopsis genome.</title>
        <authorList>
            <person name="Yamada K."/>
            <person name="Lim J."/>
            <person name="Dale J.M."/>
            <person name="Chen H."/>
            <person name="Shinn P."/>
            <person name="Palm C.J."/>
            <person name="Southwick A.M."/>
            <person name="Wu H.C."/>
            <person name="Kim C.J."/>
            <person name="Nguyen M."/>
            <person name="Pham P.K."/>
            <person name="Cheuk R.F."/>
            <person name="Karlin-Newmann G."/>
            <person name="Liu S.X."/>
            <person name="Lam B."/>
            <person name="Sakano H."/>
            <person name="Wu T."/>
            <person name="Yu G."/>
            <person name="Miranda M."/>
            <person name="Quach H.L."/>
            <person name="Tripp M."/>
            <person name="Chang C.H."/>
            <person name="Lee J.M."/>
            <person name="Toriumi M.J."/>
            <person name="Chan M.M."/>
            <person name="Tang C.C."/>
            <person name="Onodera C.S."/>
            <person name="Deng J.M."/>
            <person name="Akiyama K."/>
            <person name="Ansari Y."/>
            <person name="Arakawa T."/>
            <person name="Banh J."/>
            <person name="Banno F."/>
            <person name="Bowser L."/>
            <person name="Brooks S.Y."/>
            <person name="Carninci P."/>
            <person name="Chao Q."/>
            <person name="Choy N."/>
            <person name="Enju A."/>
            <person name="Goldsmith A.D."/>
            <person name="Gurjal M."/>
            <person name="Hansen N.F."/>
            <person name="Hayashizaki Y."/>
            <person name="Johnson-Hopson C."/>
            <person name="Hsuan V.W."/>
            <person name="Iida K."/>
            <person name="Karnes M."/>
            <person name="Khan S."/>
            <person name="Koesema E."/>
            <person name="Ishida J."/>
            <person name="Jiang P.X."/>
            <person name="Jones T."/>
            <person name="Kawai J."/>
            <person name="Kamiya A."/>
            <person name="Meyers C."/>
            <person name="Nakajima M."/>
            <person name="Narusaka M."/>
            <person name="Seki M."/>
            <person name="Sakurai T."/>
            <person name="Satou M."/>
            <person name="Tamse R."/>
            <person name="Vaysberg M."/>
            <person name="Wallender E.K."/>
            <person name="Wong C."/>
            <person name="Yamamura Y."/>
            <person name="Yuan S."/>
            <person name="Shinozaki K."/>
            <person name="Davis R.W."/>
            <person name="Theologis A."/>
            <person name="Ecker J.R."/>
        </authorList>
    </citation>
    <scope>NUCLEOTIDE SEQUENCE [LARGE SCALE MRNA]</scope>
    <source>
        <strain>cv. Columbia</strain>
    </source>
</reference>
<reference key="4">
    <citation type="submission" date="2002-03" db="EMBL/GenBank/DDBJ databases">
        <title>Full-length cDNA from Arabidopsis thaliana.</title>
        <authorList>
            <person name="Brover V.V."/>
            <person name="Troukhan M.E."/>
            <person name="Alexandrov N.A."/>
            <person name="Lu Y.-P."/>
            <person name="Flavell R.B."/>
            <person name="Feldmann K.A."/>
        </authorList>
    </citation>
    <scope>NUCLEOTIDE SEQUENCE [LARGE SCALE MRNA]</scope>
</reference>
<accession>Q84WW5</accession>
<accession>O81318</accession>
<accession>Q8LBD9</accession>
<feature type="chain" id="PRO_0000425785" description="Vesicle-associated protein 1-3">
    <location>
        <begin position="1"/>
        <end position="239"/>
    </location>
</feature>
<feature type="initiator methionine" description="Removed; alternate" evidence="3">
    <location>
        <position position="1"/>
    </location>
</feature>
<feature type="chain" id="PRO_0000402171" description="Vesicle-associated protein 1-3, N-terminally processed">
    <location>
        <begin position="2"/>
        <end position="239"/>
    </location>
</feature>
<feature type="topological domain" description="Cytoplasmic" evidence="5">
    <location>
        <begin position="2"/>
        <end position="215"/>
    </location>
</feature>
<feature type="transmembrane region" description="Helical; Anchor for type IV membrane protein" evidence="5">
    <location>
        <begin position="216"/>
        <end position="236"/>
    </location>
</feature>
<feature type="domain" description="MSP" evidence="6">
    <location>
        <begin position="6"/>
        <end position="127"/>
    </location>
</feature>
<feature type="coiled-coil region" evidence="5">
    <location>
        <begin position="179"/>
        <end position="214"/>
    </location>
</feature>
<feature type="modified residue" description="N-acetylmethionine" evidence="2">
    <location>
        <position position="1"/>
    </location>
</feature>
<feature type="modified residue" description="N-acetylthreonine; in Vesicle-associated protein 1-3, N-terminally processed" evidence="3">
    <location>
        <position position="2"/>
    </location>
</feature>
<feature type="modified residue" description="Phosphoserine" evidence="4">
    <location>
        <position position="133"/>
    </location>
</feature>
<feature type="modified residue" description="Phosphoserine" evidence="4">
    <location>
        <position position="164"/>
    </location>
</feature>
<feature type="sequence conflict" description="In Ref. 4; AAM64824." evidence="7" ref="4">
    <original>R</original>
    <variation>K</variation>
    <location>
        <position position="165"/>
    </location>
</feature>
<gene>
    <name type="primary">PVA13</name>
    <name type="ordered locus">At4g00170</name>
    <name type="ORF">F6N15.21</name>
</gene>
<organism>
    <name type="scientific">Arabidopsis thaliana</name>
    <name type="common">Mouse-ear cress</name>
    <dbReference type="NCBI Taxonomy" id="3702"/>
    <lineage>
        <taxon>Eukaryota</taxon>
        <taxon>Viridiplantae</taxon>
        <taxon>Streptophyta</taxon>
        <taxon>Embryophyta</taxon>
        <taxon>Tracheophyta</taxon>
        <taxon>Spermatophyta</taxon>
        <taxon>Magnoliopsida</taxon>
        <taxon>eudicotyledons</taxon>
        <taxon>Gunneridae</taxon>
        <taxon>Pentapetalae</taxon>
        <taxon>rosids</taxon>
        <taxon>malvids</taxon>
        <taxon>Brassicales</taxon>
        <taxon>Brassicaceae</taxon>
        <taxon>Camelineae</taxon>
        <taxon>Arabidopsis</taxon>
    </lineage>
</organism>
<sequence>MTTGDLVNIHPTELKFPFELKKQSSCSMQLTNKTTTQCVAFKVKTTNPRKYCVRPNTGVVLPGDSCNVTVTMQAQKEAPLDMQCKDKFLVQTVVVSDGTTSKEVLAEMFNKEAGRVIEDFKLRVVYIPANPPSPVPEGSEEGNSPMASLNDIASQSASLFDDVSRTFEETSEKSSEAWSMISKLTEEKTSATQQSQKLRLELEMLRKETSKKQSGGHSLLLMLLVGLLGCVIGYLLNRI</sequence>
<comment type="function">
    <text evidence="1">May play a role in vesicle trafficking.</text>
</comment>
<comment type="subcellular location">
    <subcellularLocation>
        <location evidence="1">Endoplasmic reticulum membrane</location>
        <topology evidence="1">Single-pass type IV membrane protein</topology>
        <orientation evidence="1">Cytoplasmic side</orientation>
    </subcellularLocation>
</comment>
<comment type="similarity">
    <text evidence="7">Belongs to the VAMP-associated protein (VAP) (TC 9.B.17) family.</text>
</comment>
<comment type="sequence caution" evidence="7">
    <conflict type="erroneous gene model prediction">
        <sequence resource="EMBL-CDS" id="AAC19312"/>
    </conflict>
    <text>The predicted gene has been split into 2 genes: At4g00165 and At4g00170.</text>
</comment>
<comment type="sequence caution" evidence="7">
    <conflict type="erroneous gene model prediction">
        <sequence resource="EMBL-CDS" id="CAB80775"/>
    </conflict>
    <text>The predicted gene has been split into 2 genes: At4g00165 and At4g00170.</text>
</comment>
<dbReference type="EMBL" id="AF069299">
    <property type="protein sequence ID" value="AAC19312.1"/>
    <property type="status" value="ALT_SEQ"/>
    <property type="molecule type" value="Genomic_DNA"/>
</dbReference>
<dbReference type="EMBL" id="AL161471">
    <property type="protein sequence ID" value="CAB80775.1"/>
    <property type="status" value="ALT_SEQ"/>
    <property type="molecule type" value="Genomic_DNA"/>
</dbReference>
<dbReference type="EMBL" id="CP002687">
    <property type="protein sequence ID" value="AEE81833.1"/>
    <property type="molecule type" value="Genomic_DNA"/>
</dbReference>
<dbReference type="EMBL" id="BT001917">
    <property type="protein sequence ID" value="AAN71916.1"/>
    <property type="molecule type" value="mRNA"/>
</dbReference>
<dbReference type="EMBL" id="AY087270">
    <property type="protein sequence ID" value="AAM64824.1"/>
    <property type="molecule type" value="mRNA"/>
</dbReference>
<dbReference type="PIR" id="T01345">
    <property type="entry name" value="T01345"/>
</dbReference>
<dbReference type="RefSeq" id="NP_567153.1">
    <property type="nucleotide sequence ID" value="NM_116234.4"/>
</dbReference>
<dbReference type="SMR" id="Q84WW5"/>
<dbReference type="FunCoup" id="Q84WW5">
    <property type="interactions" value="3301"/>
</dbReference>
<dbReference type="STRING" id="3702.Q84WW5"/>
<dbReference type="iPTMnet" id="Q84WW5"/>
<dbReference type="PaxDb" id="3702-AT4G00170.1"/>
<dbReference type="ProteomicsDB" id="228552"/>
<dbReference type="EnsemblPlants" id="AT4G00170.1">
    <property type="protein sequence ID" value="AT4G00170.1"/>
    <property type="gene ID" value="AT4G00170"/>
</dbReference>
<dbReference type="GeneID" id="828017"/>
<dbReference type="Gramene" id="AT4G00170.1">
    <property type="protein sequence ID" value="AT4G00170.1"/>
    <property type="gene ID" value="AT4G00170"/>
</dbReference>
<dbReference type="KEGG" id="ath:AT4G00170"/>
<dbReference type="Araport" id="AT4G00170"/>
<dbReference type="TAIR" id="AT4G00170"/>
<dbReference type="eggNOG" id="KOG0439">
    <property type="taxonomic scope" value="Eukaryota"/>
</dbReference>
<dbReference type="HOGENOM" id="CLU_036554_1_2_1"/>
<dbReference type="InParanoid" id="Q84WW5"/>
<dbReference type="OMA" id="EWPADIS"/>
<dbReference type="PhylomeDB" id="Q84WW5"/>
<dbReference type="PRO" id="PR:Q84WW5"/>
<dbReference type="Proteomes" id="UP000006548">
    <property type="component" value="Chromosome 4"/>
</dbReference>
<dbReference type="ExpressionAtlas" id="Q84WW5">
    <property type="expression patterns" value="baseline and differential"/>
</dbReference>
<dbReference type="GO" id="GO:0005783">
    <property type="term" value="C:endoplasmic reticulum"/>
    <property type="evidence" value="ECO:0007005"/>
    <property type="project" value="TAIR"/>
</dbReference>
<dbReference type="GO" id="GO:0005789">
    <property type="term" value="C:endoplasmic reticulum membrane"/>
    <property type="evidence" value="ECO:0007669"/>
    <property type="project" value="UniProtKB-SubCell"/>
</dbReference>
<dbReference type="FunFam" id="2.60.40.10:FF:000813">
    <property type="entry name" value="Vesicle-associated protein 1-1"/>
    <property type="match status" value="1"/>
</dbReference>
<dbReference type="Gene3D" id="2.60.40.10">
    <property type="entry name" value="Immunoglobulins"/>
    <property type="match status" value="1"/>
</dbReference>
<dbReference type="InterPro" id="IPR013783">
    <property type="entry name" value="Ig-like_fold"/>
</dbReference>
<dbReference type="InterPro" id="IPR000535">
    <property type="entry name" value="MSP_dom"/>
</dbReference>
<dbReference type="InterPro" id="IPR008962">
    <property type="entry name" value="PapD-like_sf"/>
</dbReference>
<dbReference type="InterPro" id="IPR016763">
    <property type="entry name" value="VAP"/>
</dbReference>
<dbReference type="PANTHER" id="PTHR10809">
    <property type="entry name" value="VESICLE-ASSOCIATED MEMBRANE PROTEIN-ASSOCIATED PROTEIN"/>
    <property type="match status" value="1"/>
</dbReference>
<dbReference type="PANTHER" id="PTHR10809:SF160">
    <property type="entry name" value="VESICLE-ASSOCIATED PROTEIN 1-3"/>
    <property type="match status" value="1"/>
</dbReference>
<dbReference type="Pfam" id="PF00635">
    <property type="entry name" value="Motile_Sperm"/>
    <property type="match status" value="1"/>
</dbReference>
<dbReference type="PIRSF" id="PIRSF019693">
    <property type="entry name" value="VAMP-associated"/>
    <property type="match status" value="1"/>
</dbReference>
<dbReference type="SUPFAM" id="SSF49354">
    <property type="entry name" value="PapD-like"/>
    <property type="match status" value="1"/>
</dbReference>
<dbReference type="PROSITE" id="PS50202">
    <property type="entry name" value="MSP"/>
    <property type="match status" value="1"/>
</dbReference>
<keyword id="KW-0007">Acetylation</keyword>
<keyword id="KW-0175">Coiled coil</keyword>
<keyword id="KW-0256">Endoplasmic reticulum</keyword>
<keyword id="KW-0472">Membrane</keyword>
<keyword id="KW-0597">Phosphoprotein</keyword>
<keyword id="KW-1185">Reference proteome</keyword>
<keyword id="KW-0812">Transmembrane</keyword>
<keyword id="KW-1133">Transmembrane helix</keyword>
<evidence type="ECO:0000250" key="1"/>
<evidence type="ECO:0000250" key="2">
    <source>
        <dbReference type="UniProtKB" id="B9DHD7"/>
    </source>
</evidence>
<evidence type="ECO:0000250" key="3">
    <source>
        <dbReference type="UniProtKB" id="Q9LVU1"/>
    </source>
</evidence>
<evidence type="ECO:0000250" key="4">
    <source>
        <dbReference type="UniProtKB" id="Q9SHC8"/>
    </source>
</evidence>
<evidence type="ECO:0000255" key="5"/>
<evidence type="ECO:0000255" key="6">
    <source>
        <dbReference type="PROSITE-ProRule" id="PRU00132"/>
    </source>
</evidence>
<evidence type="ECO:0000305" key="7"/>
<name>VAP13_ARATH</name>
<protein>
    <recommendedName>
        <fullName>Vesicle-associated protein 1-3</fullName>
    </recommendedName>
    <alternativeName>
        <fullName>Plant VAP homolog 13</fullName>
        <shortName>AtPVA13</shortName>
    </alternativeName>
    <alternativeName>
        <fullName>VAMP-associated protein 1-3</fullName>
    </alternativeName>
    <component>
        <recommendedName>
            <fullName>Vesicle-associated protein 1-3, N-terminally processed</fullName>
        </recommendedName>
    </component>
</protein>